<sequence length="1365" mass="157210">MSENEVVGSPTTNGDKNEDGYPAENGEGTNVDDNNNEEEKDGIPLDNDNDENDSSEESATDEEAERQVREGFIVEDEEDEVPQEIRRKKKRKKHAESTADQDMLDEEDLELVMENTGQGSRFSKLRRLKRGRDQEETLENIFSEEEEEEENEVDDEAPNRTQGHRAGVIDEFADFIEQDEFEDEERQEEKYETGPPIESVRPEALGISDDDYIQIYEVFGDGTDYAFALEDEDAEDELEESVSLKTIFEPSELKDKMLTEEDEIIRITDEPERMQLYMKRNIDCSEDEFREQVAWIIDYLLKNRRDIDAELYEPFQTAVRYVVHFFIRDSLEVPFIWQHRRDYIVHNNRERNTITPLLSQNDLWNIFFLCTKFWSLHSKKQDILKLYSDLGINDDLVVPFCEAASSLDAIDDLNDYIHFTYSEQIRDRALLMGTGLRRPQGSKYSFFEKFRKSSLYNLVKEFGMSAKDFSFNVAQGARLRFVEDNTLSPEELSRTYVTNELSSPEQVLQKARRVLAEEIIHDPQFRKSFRDKLYNAGVVTVLATQKGVRKIGSEHPYYEFKYLKRKPLGSFELEPILFLKMLKAEEEGLIQLSIEFEDPDDVFKGLLELFVSDNFSENAMQWNAQRELVLKEVFKRFSALAPDAIRETLRSRYLDELGMRCRNQLFSRLDQAPYEPSTKNFDRGTIPSVLAVSNGKGESSDAIICVFVDDVGEPTDSLKLADLRDLANQAMFAEFVEKVKPDVIGVSGMSVSAHKIRQHVQDSLTSHEPVDLIMVNDEVARLYQNSTRAVDEFPTLPTISCYCVALARYVQNPLFEYAAMGRDLMSLSFDPWQHLLPPDVLWKYLETALVDISSLVGIDINEAVTNKYEANILPYIAGLGPRKADYVLKKIAATGGRIDNRSDLISKQIMSRKVFINCSSFFIIPNDEYPNMDILDSTRIHNEDYELARKMASDALELDEEDIEELETNRGVVYHLLEENETGKLDELVLEEYADQLEREFHQKKRNTLEKIRLELKDPYGEQRNVFHKLTPSEIFLMLTGENPEELQADAIVPVNVRRVTNRFVAVKLDCGIDGNIKADEVSDDFIPPPQLLQVGQTVEGVIISLDEANFMVDLSLRNSVLQSANSKRQTSSHRTSYWDTEAEKRDTERMQAETQAEQRVARVIKHPLFKDLNASQAEAYLSKMQVGDLVIRPSSKGSDHIVVTWKVAEGSYQHIDVLELEKENEFTIGQKLLVKGRFEKMTYQYSDLDELIVLHIKAIAKKIDEMCIHDKFRKGTQAETEKWLESYSEANPKRSCYAFCFDHQHPGYFILCFKASVNSPVTAWPVKVIPNAFFLQGNVYGDMTALCNGFKLLYAARTKNFRRM</sequence>
<accession>Q09915</accession>
<accession>Q9P7T3</accession>
<name>SPT6_SCHPO</name>
<protein>
    <recommendedName>
        <fullName>Transcription elongation factor spt6</fullName>
    </recommendedName>
    <alternativeName>
        <fullName>Chromatin elongation factor spt6</fullName>
    </alternativeName>
</protein>
<proteinExistence type="evidence at protein level"/>
<evidence type="ECO:0000255" key="1">
    <source>
        <dbReference type="PROSITE-ProRule" id="PRU00180"/>
    </source>
</evidence>
<evidence type="ECO:0000256" key="2">
    <source>
        <dbReference type="SAM" id="MobiDB-lite"/>
    </source>
</evidence>
<evidence type="ECO:0000269" key="3">
    <source>
    </source>
</evidence>
<evidence type="ECO:0000269" key="4">
    <source>
    </source>
</evidence>
<evidence type="ECO:0000305" key="5"/>
<evidence type="ECO:0000305" key="6">
    <source>
    </source>
</evidence>
<organism>
    <name type="scientific">Schizosaccharomyces pombe (strain 972 / ATCC 24843)</name>
    <name type="common">Fission yeast</name>
    <dbReference type="NCBI Taxonomy" id="284812"/>
    <lineage>
        <taxon>Eukaryota</taxon>
        <taxon>Fungi</taxon>
        <taxon>Dikarya</taxon>
        <taxon>Ascomycota</taxon>
        <taxon>Taphrinomycotina</taxon>
        <taxon>Schizosaccharomycetes</taxon>
        <taxon>Schizosaccharomycetales</taxon>
        <taxon>Schizosaccharomycetaceae</taxon>
        <taxon>Schizosaccharomyces</taxon>
    </lineage>
</organism>
<dbReference type="EMBL" id="CU329670">
    <property type="protein sequence ID" value="CAB71845.2"/>
    <property type="molecule type" value="Genomic_DNA"/>
</dbReference>
<dbReference type="PIR" id="T38095">
    <property type="entry name" value="S62573"/>
</dbReference>
<dbReference type="PIR" id="T50252">
    <property type="entry name" value="T50252"/>
</dbReference>
<dbReference type="RefSeq" id="NP_594487.2">
    <property type="nucleotide sequence ID" value="NM_001019916.2"/>
</dbReference>
<dbReference type="SMR" id="Q09915"/>
<dbReference type="BioGRID" id="278102">
    <property type="interactions" value="14"/>
</dbReference>
<dbReference type="FunCoup" id="Q09915">
    <property type="interactions" value="931"/>
</dbReference>
<dbReference type="IntAct" id="Q09915">
    <property type="interactions" value="1"/>
</dbReference>
<dbReference type="STRING" id="284812.Q09915"/>
<dbReference type="iPTMnet" id="Q09915"/>
<dbReference type="PaxDb" id="4896-SPAC1F7.01c.1"/>
<dbReference type="EnsemblFungi" id="SPAC1F7.01c.1">
    <property type="protein sequence ID" value="SPAC1F7.01c.1:pep"/>
    <property type="gene ID" value="SPAC1F7.01c"/>
</dbReference>
<dbReference type="GeneID" id="2541605"/>
<dbReference type="KEGG" id="spo:2541605"/>
<dbReference type="PomBase" id="SPAC1F7.01c">
    <property type="gene designation" value="spt6"/>
</dbReference>
<dbReference type="VEuPathDB" id="FungiDB:SPAC1F7.01c"/>
<dbReference type="eggNOG" id="KOG1856">
    <property type="taxonomic scope" value="Eukaryota"/>
</dbReference>
<dbReference type="HOGENOM" id="CLU_001680_0_1_1"/>
<dbReference type="InParanoid" id="Q09915"/>
<dbReference type="OMA" id="GYFYLCF"/>
<dbReference type="PhylomeDB" id="Q09915"/>
<dbReference type="PRO" id="PR:Q09915"/>
<dbReference type="Proteomes" id="UP000002485">
    <property type="component" value="Chromosome I"/>
</dbReference>
<dbReference type="GO" id="GO:0005634">
    <property type="term" value="C:nucleus"/>
    <property type="evidence" value="ECO:0007005"/>
    <property type="project" value="PomBase"/>
</dbReference>
<dbReference type="GO" id="GO:0005721">
    <property type="term" value="C:pericentric heterochromatin"/>
    <property type="evidence" value="ECO:0000314"/>
    <property type="project" value="PomBase"/>
</dbReference>
<dbReference type="GO" id="GO:0008023">
    <property type="term" value="C:transcription elongation factor complex"/>
    <property type="evidence" value="ECO:0000318"/>
    <property type="project" value="GO_Central"/>
</dbReference>
<dbReference type="GO" id="GO:0003677">
    <property type="term" value="F:DNA binding"/>
    <property type="evidence" value="ECO:0007669"/>
    <property type="project" value="InterPro"/>
</dbReference>
<dbReference type="GO" id="GO:0000510">
    <property type="term" value="F:H3-H4 histone complex chaperone activity"/>
    <property type="evidence" value="ECO:0000305"/>
    <property type="project" value="PomBase"/>
</dbReference>
<dbReference type="GO" id="GO:0042393">
    <property type="term" value="F:histone binding"/>
    <property type="evidence" value="ECO:0000318"/>
    <property type="project" value="GO_Central"/>
</dbReference>
<dbReference type="GO" id="GO:0031491">
    <property type="term" value="F:nucleosome binding"/>
    <property type="evidence" value="ECO:0000318"/>
    <property type="project" value="GO_Central"/>
</dbReference>
<dbReference type="GO" id="GO:0034728">
    <property type="term" value="P:nucleosome organization"/>
    <property type="evidence" value="ECO:0000318"/>
    <property type="project" value="GO_Central"/>
</dbReference>
<dbReference type="GO" id="GO:0006366">
    <property type="term" value="P:transcription by RNA polymerase II"/>
    <property type="evidence" value="ECO:0000315"/>
    <property type="project" value="PomBase"/>
</dbReference>
<dbReference type="GO" id="GO:0006368">
    <property type="term" value="P:transcription elongation by RNA polymerase II"/>
    <property type="evidence" value="ECO:0000318"/>
    <property type="project" value="GO_Central"/>
</dbReference>
<dbReference type="GO" id="GO:0140673">
    <property type="term" value="P:transcription elongation-coupled chromatin remodeling"/>
    <property type="evidence" value="ECO:0000315"/>
    <property type="project" value="PomBase"/>
</dbReference>
<dbReference type="CDD" id="cd00164">
    <property type="entry name" value="S1_like"/>
    <property type="match status" value="1"/>
</dbReference>
<dbReference type="CDD" id="cd09928">
    <property type="entry name" value="SH2_Cterm_SPT6_like"/>
    <property type="match status" value="1"/>
</dbReference>
<dbReference type="CDD" id="cd09918">
    <property type="entry name" value="SH2_Nterm_SPT6_like"/>
    <property type="match status" value="1"/>
</dbReference>
<dbReference type="FunFam" id="3.30.505.10:FF:000065">
    <property type="entry name" value="Transcription elongation factor SPT6"/>
    <property type="match status" value="1"/>
</dbReference>
<dbReference type="FunFam" id="1.10.10.2740:FF:000002">
    <property type="entry name" value="Transcription elongation factor Spt6"/>
    <property type="match status" value="1"/>
</dbReference>
<dbReference type="FunFam" id="3.30.505.10:FF:000056">
    <property type="entry name" value="Transcription elongation factor Spt6"/>
    <property type="match status" value="1"/>
</dbReference>
<dbReference type="FunFam" id="1.10.150.850:FF:000001">
    <property type="entry name" value="Transcription elongation factor spt6"/>
    <property type="match status" value="1"/>
</dbReference>
<dbReference type="Gene3D" id="2.40.50.140">
    <property type="entry name" value="Nucleic acid-binding proteins"/>
    <property type="match status" value="1"/>
</dbReference>
<dbReference type="Gene3D" id="1.10.10.650">
    <property type="entry name" value="RuvA domain 2-like"/>
    <property type="match status" value="1"/>
</dbReference>
<dbReference type="Gene3D" id="3.30.505.10">
    <property type="entry name" value="SH2 domain"/>
    <property type="match status" value="2"/>
</dbReference>
<dbReference type="Gene3D" id="1.10.10.2740">
    <property type="entry name" value="Spt6, Death-like domain"/>
    <property type="match status" value="1"/>
</dbReference>
<dbReference type="Gene3D" id="1.10.150.850">
    <property type="entry name" value="Spt6, helix-hairpin-helix domain"/>
    <property type="match status" value="1"/>
</dbReference>
<dbReference type="Gene3D" id="1.10.3500.10">
    <property type="entry name" value="Tex N-terminal region-like"/>
    <property type="match status" value="1"/>
</dbReference>
<dbReference type="Gene3D" id="3.30.420.140">
    <property type="entry name" value="YqgF/RNase H-like domain"/>
    <property type="match status" value="1"/>
</dbReference>
<dbReference type="InterPro" id="IPR012340">
    <property type="entry name" value="NA-bd_OB-fold"/>
</dbReference>
<dbReference type="InterPro" id="IPR012337">
    <property type="entry name" value="RNaseH-like_sf"/>
</dbReference>
<dbReference type="InterPro" id="IPR010994">
    <property type="entry name" value="RuvA_2-like"/>
</dbReference>
<dbReference type="InterPro" id="IPR003029">
    <property type="entry name" value="S1_domain"/>
</dbReference>
<dbReference type="InterPro" id="IPR036860">
    <property type="entry name" value="SH2_dom_sf"/>
</dbReference>
<dbReference type="InterPro" id="IPR049540">
    <property type="entry name" value="Spt6-like_S1"/>
</dbReference>
<dbReference type="InterPro" id="IPR028083">
    <property type="entry name" value="Spt6_acidic_N_dom"/>
</dbReference>
<dbReference type="InterPro" id="IPR042066">
    <property type="entry name" value="Spt6_death-like"/>
</dbReference>
<dbReference type="InterPro" id="IPR032706">
    <property type="entry name" value="Spt6_HHH"/>
</dbReference>
<dbReference type="InterPro" id="IPR028088">
    <property type="entry name" value="Spt6_HTH_DNA-bd_dom"/>
</dbReference>
<dbReference type="InterPro" id="IPR035420">
    <property type="entry name" value="Spt6_SH2"/>
</dbReference>
<dbReference type="InterPro" id="IPR035018">
    <property type="entry name" value="Spt6_SH2_C"/>
</dbReference>
<dbReference type="InterPro" id="IPR035019">
    <property type="entry name" value="Spt6_SH2_N"/>
</dbReference>
<dbReference type="InterPro" id="IPR028231">
    <property type="entry name" value="Spt6_YqgF"/>
</dbReference>
<dbReference type="InterPro" id="IPR055179">
    <property type="entry name" value="Tex-like_central_region"/>
</dbReference>
<dbReference type="InterPro" id="IPR023323">
    <property type="entry name" value="Tex-like_dom_sf"/>
</dbReference>
<dbReference type="InterPro" id="IPR023319">
    <property type="entry name" value="Tex-like_HTH_dom_sf"/>
</dbReference>
<dbReference type="InterPro" id="IPR017072">
    <property type="entry name" value="TF_Spt6"/>
</dbReference>
<dbReference type="InterPro" id="IPR006641">
    <property type="entry name" value="YqgF/RNaseH-like_dom"/>
</dbReference>
<dbReference type="InterPro" id="IPR037027">
    <property type="entry name" value="YqgF/RNaseH-like_dom_sf"/>
</dbReference>
<dbReference type="PANTHER" id="PTHR10145">
    <property type="entry name" value="TRANSCRIPTION ELONGATION FACTOR SPT6"/>
    <property type="match status" value="1"/>
</dbReference>
<dbReference type="PANTHER" id="PTHR10145:SF6">
    <property type="entry name" value="TRANSCRIPTION ELONGATION FACTOR SPT6"/>
    <property type="match status" value="1"/>
</dbReference>
<dbReference type="Pfam" id="PF14635">
    <property type="entry name" value="HHH_7"/>
    <property type="match status" value="1"/>
</dbReference>
<dbReference type="Pfam" id="PF14641">
    <property type="entry name" value="HTH_44"/>
    <property type="match status" value="1"/>
</dbReference>
<dbReference type="Pfam" id="PF14633">
    <property type="entry name" value="SH2_2"/>
    <property type="match status" value="1"/>
</dbReference>
<dbReference type="Pfam" id="PF14632">
    <property type="entry name" value="SPT6_acidic"/>
    <property type="match status" value="1"/>
</dbReference>
<dbReference type="Pfam" id="PF21710">
    <property type="entry name" value="Spt6_S1"/>
    <property type="match status" value="1"/>
</dbReference>
<dbReference type="Pfam" id="PF22706">
    <property type="entry name" value="Tex_central_region"/>
    <property type="match status" value="1"/>
</dbReference>
<dbReference type="Pfam" id="PF14639">
    <property type="entry name" value="YqgF"/>
    <property type="match status" value="1"/>
</dbReference>
<dbReference type="PIRSF" id="PIRSF036947">
    <property type="entry name" value="Spt6"/>
    <property type="match status" value="1"/>
</dbReference>
<dbReference type="SMART" id="SM00316">
    <property type="entry name" value="S1"/>
    <property type="match status" value="1"/>
</dbReference>
<dbReference type="SMART" id="SM00732">
    <property type="entry name" value="YqgFc"/>
    <property type="match status" value="1"/>
</dbReference>
<dbReference type="SUPFAM" id="SSF50249">
    <property type="entry name" value="Nucleic acid-binding proteins"/>
    <property type="match status" value="1"/>
</dbReference>
<dbReference type="SUPFAM" id="SSF53098">
    <property type="entry name" value="Ribonuclease H-like"/>
    <property type="match status" value="1"/>
</dbReference>
<dbReference type="SUPFAM" id="SSF47781">
    <property type="entry name" value="RuvA domain 2-like"/>
    <property type="match status" value="1"/>
</dbReference>
<dbReference type="SUPFAM" id="SSF55550">
    <property type="entry name" value="SH2 domain"/>
    <property type="match status" value="1"/>
</dbReference>
<dbReference type="SUPFAM" id="SSF158832">
    <property type="entry name" value="Tex N-terminal region-like"/>
    <property type="match status" value="1"/>
</dbReference>
<dbReference type="PROSITE" id="PS50126">
    <property type="entry name" value="S1"/>
    <property type="match status" value="1"/>
</dbReference>
<reference key="1">
    <citation type="journal article" date="2002" name="Nature">
        <title>The genome sequence of Schizosaccharomyces pombe.</title>
        <authorList>
            <person name="Wood V."/>
            <person name="Gwilliam R."/>
            <person name="Rajandream M.A."/>
            <person name="Lyne M.H."/>
            <person name="Lyne R."/>
            <person name="Stewart A."/>
            <person name="Sgouros J.G."/>
            <person name="Peat N."/>
            <person name="Hayles J."/>
            <person name="Baker S.G."/>
            <person name="Basham D."/>
            <person name="Bowman S."/>
            <person name="Brooks K."/>
            <person name="Brown D."/>
            <person name="Brown S."/>
            <person name="Chillingworth T."/>
            <person name="Churcher C.M."/>
            <person name="Collins M."/>
            <person name="Connor R."/>
            <person name="Cronin A."/>
            <person name="Davis P."/>
            <person name="Feltwell T."/>
            <person name="Fraser A."/>
            <person name="Gentles S."/>
            <person name="Goble A."/>
            <person name="Hamlin N."/>
            <person name="Harris D.E."/>
            <person name="Hidalgo J."/>
            <person name="Hodgson G."/>
            <person name="Holroyd S."/>
            <person name="Hornsby T."/>
            <person name="Howarth S."/>
            <person name="Huckle E.J."/>
            <person name="Hunt S."/>
            <person name="Jagels K."/>
            <person name="James K.D."/>
            <person name="Jones L."/>
            <person name="Jones M."/>
            <person name="Leather S."/>
            <person name="McDonald S."/>
            <person name="McLean J."/>
            <person name="Mooney P."/>
            <person name="Moule S."/>
            <person name="Mungall K.L."/>
            <person name="Murphy L.D."/>
            <person name="Niblett D."/>
            <person name="Odell C."/>
            <person name="Oliver K."/>
            <person name="O'Neil S."/>
            <person name="Pearson D."/>
            <person name="Quail M.A."/>
            <person name="Rabbinowitsch E."/>
            <person name="Rutherford K.M."/>
            <person name="Rutter S."/>
            <person name="Saunders D."/>
            <person name="Seeger K."/>
            <person name="Sharp S."/>
            <person name="Skelton J."/>
            <person name="Simmonds M.N."/>
            <person name="Squares R."/>
            <person name="Squares S."/>
            <person name="Stevens K."/>
            <person name="Taylor K."/>
            <person name="Taylor R.G."/>
            <person name="Tivey A."/>
            <person name="Walsh S.V."/>
            <person name="Warren T."/>
            <person name="Whitehead S."/>
            <person name="Woodward J.R."/>
            <person name="Volckaert G."/>
            <person name="Aert R."/>
            <person name="Robben J."/>
            <person name="Grymonprez B."/>
            <person name="Weltjens I."/>
            <person name="Vanstreels E."/>
            <person name="Rieger M."/>
            <person name="Schaefer M."/>
            <person name="Mueller-Auer S."/>
            <person name="Gabel C."/>
            <person name="Fuchs M."/>
            <person name="Duesterhoeft A."/>
            <person name="Fritzc C."/>
            <person name="Holzer E."/>
            <person name="Moestl D."/>
            <person name="Hilbert H."/>
            <person name="Borzym K."/>
            <person name="Langer I."/>
            <person name="Beck A."/>
            <person name="Lehrach H."/>
            <person name="Reinhardt R."/>
            <person name="Pohl T.M."/>
            <person name="Eger P."/>
            <person name="Zimmermann W."/>
            <person name="Wedler H."/>
            <person name="Wambutt R."/>
            <person name="Purnelle B."/>
            <person name="Goffeau A."/>
            <person name="Cadieu E."/>
            <person name="Dreano S."/>
            <person name="Gloux S."/>
            <person name="Lelaure V."/>
            <person name="Mottier S."/>
            <person name="Galibert F."/>
            <person name="Aves S.J."/>
            <person name="Xiang Z."/>
            <person name="Hunt C."/>
            <person name="Moore K."/>
            <person name="Hurst S.M."/>
            <person name="Lucas M."/>
            <person name="Rochet M."/>
            <person name="Gaillardin C."/>
            <person name="Tallada V.A."/>
            <person name="Garzon A."/>
            <person name="Thode G."/>
            <person name="Daga R.R."/>
            <person name="Cruzado L."/>
            <person name="Jimenez J."/>
            <person name="Sanchez M."/>
            <person name="del Rey F."/>
            <person name="Benito J."/>
            <person name="Dominguez A."/>
            <person name="Revuelta J.L."/>
            <person name="Moreno S."/>
            <person name="Armstrong J."/>
            <person name="Forsburg S.L."/>
            <person name="Cerutti L."/>
            <person name="Lowe T."/>
            <person name="McCombie W.R."/>
            <person name="Paulsen I."/>
            <person name="Potashkin J."/>
            <person name="Shpakovski G.V."/>
            <person name="Ussery D."/>
            <person name="Barrell B.G."/>
            <person name="Nurse P."/>
        </authorList>
    </citation>
    <scope>NUCLEOTIDE SEQUENCE [LARGE SCALE GENOMIC DNA]</scope>
    <source>
        <strain>972 / ATCC 24843</strain>
    </source>
</reference>
<reference key="2">
    <citation type="journal article" date="2008" name="J. Proteome Res.">
        <title>Phosphoproteome analysis of fission yeast.</title>
        <authorList>
            <person name="Wilson-Grady J.T."/>
            <person name="Villen J."/>
            <person name="Gygi S.P."/>
        </authorList>
    </citation>
    <scope>PHOSPHORYLATION [LARGE SCALE ANALYSIS] AT THR-137; SER-143 AND SER-454</scope>
    <scope>IDENTIFICATION BY MASS SPECTROMETRY</scope>
</reference>
<reference key="3">
    <citation type="journal article" date="2013" name="Sci. Rep.">
        <title>Spt6 prevents transcription-coupled loss of posttranslationally modified histone H3.</title>
        <authorList>
            <person name="Kato H."/>
            <person name="Okazaki K."/>
            <person name="Iida T."/>
            <person name="Nakayama J."/>
            <person name="Murakami Y."/>
            <person name="Urano T."/>
        </authorList>
    </citation>
    <scope>FUNCTION</scope>
    <scope>SUBCELLULAR LOCATION</scope>
    <scope>DISRUPTION PHENOTYPE</scope>
</reference>
<gene>
    <name type="primary">spt6</name>
    <name type="ORF">SPAC1F7.01c</name>
    <name type="ORF">SPAC694.07c</name>
</gene>
<feature type="chain" id="PRO_0000116440" description="Transcription elongation factor spt6">
    <location>
        <begin position="1"/>
        <end position="1365"/>
    </location>
</feature>
<feature type="domain" description="S1 motif" evidence="1">
    <location>
        <begin position="1050"/>
        <end position="1118"/>
    </location>
</feature>
<feature type="domain" description="SH2">
    <location>
        <begin position="1167"/>
        <end position="1262"/>
    </location>
</feature>
<feature type="region of interest" description="Disordered" evidence="2">
    <location>
        <begin position="1"/>
        <end position="165"/>
    </location>
</feature>
<feature type="region of interest" description="Disordered" evidence="2">
    <location>
        <begin position="181"/>
        <end position="202"/>
    </location>
</feature>
<feature type="region of interest" description="Disordered" evidence="2">
    <location>
        <begin position="1124"/>
        <end position="1146"/>
    </location>
</feature>
<feature type="compositionally biased region" description="Polar residues" evidence="2">
    <location>
        <begin position="1"/>
        <end position="14"/>
    </location>
</feature>
<feature type="compositionally biased region" description="Low complexity" evidence="2">
    <location>
        <begin position="24"/>
        <end position="33"/>
    </location>
</feature>
<feature type="compositionally biased region" description="Acidic residues" evidence="2">
    <location>
        <begin position="47"/>
        <end position="64"/>
    </location>
</feature>
<feature type="compositionally biased region" description="Acidic residues" evidence="2">
    <location>
        <begin position="73"/>
        <end position="82"/>
    </location>
</feature>
<feature type="compositionally biased region" description="Acidic residues" evidence="2">
    <location>
        <begin position="102"/>
        <end position="111"/>
    </location>
</feature>
<feature type="compositionally biased region" description="Acidic residues" evidence="2">
    <location>
        <begin position="136"/>
        <end position="156"/>
    </location>
</feature>
<feature type="compositionally biased region" description="Polar residues" evidence="2">
    <location>
        <begin position="1124"/>
        <end position="1139"/>
    </location>
</feature>
<feature type="modified residue" description="Phosphothreonine" evidence="3">
    <location>
        <position position="137"/>
    </location>
</feature>
<feature type="modified residue" description="Phosphoserine" evidence="3">
    <location>
        <position position="143"/>
    </location>
</feature>
<feature type="modified residue" description="Phosphoserine" evidence="3">
    <location>
        <position position="454"/>
    </location>
</feature>
<keyword id="KW-0158">Chromosome</keyword>
<keyword id="KW-0539">Nucleus</keyword>
<keyword id="KW-0597">Phosphoprotein</keyword>
<keyword id="KW-1185">Reference proteome</keyword>
<keyword id="KW-0727">SH2 domain</keyword>
<keyword id="KW-0804">Transcription</keyword>
<comment type="function">
    <text evidence="4">Histone H3-H4 chaperone that plays a role in maintenance of chromatin structure during RNA polymerase II transcription elongation thereby repressing transcription initiation from cryptic promoters (PubMed:23851719). Mediates the reassembly of nucleosomes onto the promoters of at least a selected set of genes during repression; the nucleosome reassembly is essential for transcriptional repression (PubMed:23851719).</text>
</comment>
<comment type="subcellular location">
    <subcellularLocation>
        <location evidence="6">Nucleus</location>
    </subcellularLocation>
    <subcellularLocation>
        <location evidence="6">Chromosome</location>
    </subcellularLocation>
</comment>
<comment type="disruption phenotype">
    <text evidence="4">Loss of nucleosomes at actively transcribed genes (PubMed:23851719). Abnormal heterochromatin formation; decreases histone H3 occupancy at the pericentromeric region (PubMed:23851719). Decreases cell population growth (PubMed:23851719).</text>
</comment>
<comment type="similarity">
    <text evidence="5">Belongs to the SPT6 family.</text>
</comment>